<comment type="function">
    <text evidence="1">Sequence-specific RNA-binding protein that regulates translation and mRNA stability by binding the 3'-UTR of target mRNAs.</text>
</comment>
<comment type="subcellular location">
    <subcellularLocation>
        <location evidence="3">Cytoplasm</location>
    </subcellularLocation>
    <subcellularLocation>
        <location evidence="3">Nucleus</location>
    </subcellularLocation>
</comment>
<comment type="domain">
    <text evidence="1">The pumilio repeats mediate the association with RNA by packing together to form a right-handed superhelix that approximates a half donut. The number as well as the specific sequence of the repeats determine the specificity for target mRNAs (By similarity).</text>
</comment>
<comment type="sequence caution" evidence="4">
    <conflict type="erroneous gene model prediction">
        <sequence resource="EMBL-CDS" id="BAA97177"/>
    </conflict>
</comment>
<name>PUM12_ARATH</name>
<gene>
    <name type="primary">APUM12</name>
    <name type="ordered locus">At5g56510</name>
    <name type="ORF">MKN22.2</name>
</gene>
<protein>
    <recommendedName>
        <fullName>Pumilio homolog 12</fullName>
        <shortName>APUM-12</shortName>
        <shortName>AtPUM12</shortName>
    </recommendedName>
</protein>
<reference key="1">
    <citation type="journal article" date="2000" name="DNA Res.">
        <title>Structural analysis of Arabidopsis thaliana chromosome 5. X. Sequence features of the regions of 3,076,755 bp covered by sixty P1 and TAC clones.</title>
        <authorList>
            <person name="Sato S."/>
            <person name="Nakamura Y."/>
            <person name="Kaneko T."/>
            <person name="Katoh T."/>
            <person name="Asamizu E."/>
            <person name="Kotani H."/>
            <person name="Tabata S."/>
        </authorList>
    </citation>
    <scope>NUCLEOTIDE SEQUENCE [LARGE SCALE GENOMIC DNA]</scope>
    <source>
        <strain>cv. Columbia</strain>
    </source>
</reference>
<reference key="2">
    <citation type="journal article" date="2017" name="Plant J.">
        <title>Araport11: a complete reannotation of the Arabidopsis thaliana reference genome.</title>
        <authorList>
            <person name="Cheng C.Y."/>
            <person name="Krishnakumar V."/>
            <person name="Chan A.P."/>
            <person name="Thibaud-Nissen F."/>
            <person name="Schobel S."/>
            <person name="Town C.D."/>
        </authorList>
    </citation>
    <scope>GENOME REANNOTATION</scope>
    <source>
        <strain>cv. Columbia</strain>
    </source>
</reference>
<reference key="3">
    <citation type="journal article" date="2009" name="FEBS J.">
        <title>Molecular characterization of Arabidopsis thaliana PUF proteins -- binding specificity and target candidates.</title>
        <authorList>
            <person name="Francischini C.W."/>
            <person name="Quaggio R.B."/>
        </authorList>
    </citation>
    <scope>GENE FAMILY</scope>
</reference>
<reference key="4">
    <citation type="journal article" date="2010" name="BMC Plant Biol.">
        <title>The Puf family of RNA-binding proteins in plants: phylogeny, structural modeling, activity and subcellular localization.</title>
        <authorList>
            <person name="Tam P.P."/>
            <person name="Barrette-Ng I.H."/>
            <person name="Simon D.M."/>
            <person name="Tam M.W."/>
            <person name="Ang A.L."/>
            <person name="Muench D.G."/>
        </authorList>
    </citation>
    <scope>GENE FAMILY</scope>
    <scope>SUBCELLULAR LOCATION</scope>
</reference>
<feature type="chain" id="PRO_0000401394" description="Pumilio homolog 12">
    <location>
        <begin position="1"/>
        <end position="596"/>
    </location>
</feature>
<feature type="domain" description="PUM-HD" evidence="2">
    <location>
        <begin position="254"/>
        <end position="596"/>
    </location>
</feature>
<feature type="repeat" description="Pumilio 1">
    <location>
        <begin position="277"/>
        <end position="312"/>
    </location>
</feature>
<feature type="repeat" description="Pumilio 2">
    <location>
        <begin position="313"/>
        <end position="348"/>
    </location>
</feature>
<feature type="repeat" description="Pumilio 3">
    <location>
        <begin position="349"/>
        <end position="388"/>
    </location>
</feature>
<feature type="repeat" description="Pumilio 4">
    <location>
        <begin position="389"/>
        <end position="424"/>
    </location>
</feature>
<feature type="repeat" description="Pumilio 5">
    <location>
        <begin position="425"/>
        <end position="460"/>
    </location>
</feature>
<feature type="repeat" description="Pumilio 6">
    <location>
        <begin position="461"/>
        <end position="496"/>
    </location>
</feature>
<feature type="repeat" description="Pumilio 7">
    <location>
        <begin position="497"/>
        <end position="532"/>
    </location>
</feature>
<feature type="repeat" description="Pumilio 8">
    <location>
        <begin position="533"/>
        <end position="570"/>
    </location>
</feature>
<organism>
    <name type="scientific">Arabidopsis thaliana</name>
    <name type="common">Mouse-ear cress</name>
    <dbReference type="NCBI Taxonomy" id="3702"/>
    <lineage>
        <taxon>Eukaryota</taxon>
        <taxon>Viridiplantae</taxon>
        <taxon>Streptophyta</taxon>
        <taxon>Embryophyta</taxon>
        <taxon>Tracheophyta</taxon>
        <taxon>Spermatophyta</taxon>
        <taxon>Magnoliopsida</taxon>
        <taxon>eudicotyledons</taxon>
        <taxon>Gunneridae</taxon>
        <taxon>Pentapetalae</taxon>
        <taxon>rosids</taxon>
        <taxon>malvids</taxon>
        <taxon>Brassicales</taxon>
        <taxon>Brassicaceae</taxon>
        <taxon>Camelineae</taxon>
        <taxon>Arabidopsis</taxon>
    </lineage>
</organism>
<proteinExistence type="evidence at transcript level"/>
<dbReference type="EMBL" id="AB019234">
    <property type="protein sequence ID" value="BAA97177.1"/>
    <property type="status" value="ALT_SEQ"/>
    <property type="molecule type" value="Genomic_DNA"/>
</dbReference>
<dbReference type="EMBL" id="CP002688">
    <property type="protein sequence ID" value="AED96775.1"/>
    <property type="molecule type" value="Genomic_DNA"/>
</dbReference>
<dbReference type="EMBL" id="CP002688">
    <property type="protein sequence ID" value="ANM71040.1"/>
    <property type="molecule type" value="Genomic_DNA"/>
</dbReference>
<dbReference type="EMBL" id="CP002688">
    <property type="protein sequence ID" value="ANM71041.1"/>
    <property type="molecule type" value="Genomic_DNA"/>
</dbReference>
<dbReference type="EMBL" id="CP002688">
    <property type="protein sequence ID" value="ANM71042.1"/>
    <property type="molecule type" value="Genomic_DNA"/>
</dbReference>
<dbReference type="EMBL" id="CP002688">
    <property type="protein sequence ID" value="ANM71043.1"/>
    <property type="molecule type" value="Genomic_DNA"/>
</dbReference>
<dbReference type="RefSeq" id="NP_001318812.1">
    <property type="nucleotide sequence ID" value="NM_001345201.1"/>
</dbReference>
<dbReference type="RefSeq" id="NP_001332599.1">
    <property type="nucleotide sequence ID" value="NM_001345204.1"/>
</dbReference>
<dbReference type="RefSeq" id="NP_001332600.1">
    <property type="nucleotide sequence ID" value="NM_001345203.1"/>
</dbReference>
<dbReference type="RefSeq" id="NP_001332601.1">
    <property type="nucleotide sequence ID" value="NM_001345202.1"/>
</dbReference>
<dbReference type="RefSeq" id="NP_200462.2">
    <property type="nucleotide sequence ID" value="NM_125034.2"/>
</dbReference>
<dbReference type="SMR" id="Q9LVC3"/>
<dbReference type="BioGRID" id="20996">
    <property type="interactions" value="1"/>
</dbReference>
<dbReference type="STRING" id="3702.Q9LVC3"/>
<dbReference type="PaxDb" id="3702-AT5G56510.1"/>
<dbReference type="ProteomicsDB" id="224863"/>
<dbReference type="EnsemblPlants" id="AT5G56510.1">
    <property type="protein sequence ID" value="AT5G56510.1"/>
    <property type="gene ID" value="AT5G56510"/>
</dbReference>
<dbReference type="EnsemblPlants" id="AT5G56510.2">
    <property type="protein sequence ID" value="AT5G56510.2"/>
    <property type="gene ID" value="AT5G56510"/>
</dbReference>
<dbReference type="EnsemblPlants" id="AT5G56510.3">
    <property type="protein sequence ID" value="AT5G56510.3"/>
    <property type="gene ID" value="AT5G56510"/>
</dbReference>
<dbReference type="EnsemblPlants" id="AT5G56510.4">
    <property type="protein sequence ID" value="AT5G56510.4"/>
    <property type="gene ID" value="AT5G56510"/>
</dbReference>
<dbReference type="EnsemblPlants" id="AT5G56510.6">
    <property type="protein sequence ID" value="AT5G56510.6"/>
    <property type="gene ID" value="AT5G56510"/>
</dbReference>
<dbReference type="GeneID" id="835752"/>
<dbReference type="Gramene" id="AT5G56510.1">
    <property type="protein sequence ID" value="AT5G56510.1"/>
    <property type="gene ID" value="AT5G56510"/>
</dbReference>
<dbReference type="Gramene" id="AT5G56510.2">
    <property type="protein sequence ID" value="AT5G56510.2"/>
    <property type="gene ID" value="AT5G56510"/>
</dbReference>
<dbReference type="Gramene" id="AT5G56510.3">
    <property type="protein sequence ID" value="AT5G56510.3"/>
    <property type="gene ID" value="AT5G56510"/>
</dbReference>
<dbReference type="Gramene" id="AT5G56510.4">
    <property type="protein sequence ID" value="AT5G56510.4"/>
    <property type="gene ID" value="AT5G56510"/>
</dbReference>
<dbReference type="Gramene" id="AT5G56510.6">
    <property type="protein sequence ID" value="AT5G56510.6"/>
    <property type="gene ID" value="AT5G56510"/>
</dbReference>
<dbReference type="KEGG" id="ath:AT5G56510"/>
<dbReference type="Araport" id="AT5G56510"/>
<dbReference type="TAIR" id="AT5G56510">
    <property type="gene designation" value="PUM12"/>
</dbReference>
<dbReference type="eggNOG" id="KOG2049">
    <property type="taxonomic scope" value="Eukaryota"/>
</dbReference>
<dbReference type="HOGENOM" id="CLU_004017_3_0_1"/>
<dbReference type="InParanoid" id="Q9LVC3"/>
<dbReference type="OMA" id="FPICMSS"/>
<dbReference type="OrthoDB" id="668540at2759"/>
<dbReference type="PhylomeDB" id="Q9LVC3"/>
<dbReference type="PRO" id="PR:Q9LVC3"/>
<dbReference type="Proteomes" id="UP000006548">
    <property type="component" value="Chromosome 5"/>
</dbReference>
<dbReference type="ExpressionAtlas" id="Q9LVC3">
    <property type="expression patterns" value="baseline and differential"/>
</dbReference>
<dbReference type="GO" id="GO:0005737">
    <property type="term" value="C:cytoplasm"/>
    <property type="evidence" value="ECO:0000314"/>
    <property type="project" value="TAIR"/>
</dbReference>
<dbReference type="GO" id="GO:0005634">
    <property type="term" value="C:nucleus"/>
    <property type="evidence" value="ECO:0000314"/>
    <property type="project" value="TAIR"/>
</dbReference>
<dbReference type="GO" id="GO:0003723">
    <property type="term" value="F:RNA binding"/>
    <property type="evidence" value="ECO:0007669"/>
    <property type="project" value="UniProtKB-KW"/>
</dbReference>
<dbReference type="GO" id="GO:0006417">
    <property type="term" value="P:regulation of translation"/>
    <property type="evidence" value="ECO:0007669"/>
    <property type="project" value="UniProtKB-KW"/>
</dbReference>
<dbReference type="CDD" id="cd07920">
    <property type="entry name" value="Pumilio"/>
    <property type="match status" value="1"/>
</dbReference>
<dbReference type="FunFam" id="1.25.10.10:FF:000237">
    <property type="entry name" value="Pumilio homolog 9"/>
    <property type="match status" value="1"/>
</dbReference>
<dbReference type="Gene3D" id="1.25.10.10">
    <property type="entry name" value="Leucine-rich Repeat Variant"/>
    <property type="match status" value="1"/>
</dbReference>
<dbReference type="InterPro" id="IPR011989">
    <property type="entry name" value="ARM-like"/>
</dbReference>
<dbReference type="InterPro" id="IPR016024">
    <property type="entry name" value="ARM-type_fold"/>
</dbReference>
<dbReference type="InterPro" id="IPR033133">
    <property type="entry name" value="PUM-HD"/>
</dbReference>
<dbReference type="InterPro" id="IPR033712">
    <property type="entry name" value="Pumilio_RNA-bd"/>
</dbReference>
<dbReference type="InterPro" id="IPR001313">
    <property type="entry name" value="Pumilio_RNA-bd_rpt"/>
</dbReference>
<dbReference type="PANTHER" id="PTHR12537:SF147">
    <property type="entry name" value="PUMILIO HOMOLOG 12"/>
    <property type="match status" value="1"/>
</dbReference>
<dbReference type="PANTHER" id="PTHR12537">
    <property type="entry name" value="RNA BINDING PROTEIN PUMILIO-RELATED"/>
    <property type="match status" value="1"/>
</dbReference>
<dbReference type="Pfam" id="PF00806">
    <property type="entry name" value="PUF"/>
    <property type="match status" value="8"/>
</dbReference>
<dbReference type="SMART" id="SM00025">
    <property type="entry name" value="Pumilio"/>
    <property type="match status" value="8"/>
</dbReference>
<dbReference type="SUPFAM" id="SSF48371">
    <property type="entry name" value="ARM repeat"/>
    <property type="match status" value="1"/>
</dbReference>
<dbReference type="PROSITE" id="PS50302">
    <property type="entry name" value="PUM"/>
    <property type="match status" value="9"/>
</dbReference>
<dbReference type="PROSITE" id="PS50303">
    <property type="entry name" value="PUM_HD"/>
    <property type="match status" value="1"/>
</dbReference>
<accession>Q9LVC3</accession>
<keyword id="KW-0963">Cytoplasm</keyword>
<keyword id="KW-0539">Nucleus</keyword>
<keyword id="KW-1185">Reference proteome</keyword>
<keyword id="KW-0677">Repeat</keyword>
<keyword id="KW-0694">RNA-binding</keyword>
<keyword id="KW-0810">Translation regulation</keyword>
<evidence type="ECO:0000250" key="1"/>
<evidence type="ECO:0000255" key="2">
    <source>
        <dbReference type="PROSITE-ProRule" id="PRU00318"/>
    </source>
</evidence>
<evidence type="ECO:0000269" key="3">
    <source>
    </source>
</evidence>
<evidence type="ECO:0000305" key="4"/>
<sequence length="596" mass="68671">MDQRRGNELDEFEKLLGEIPKVTSGNDYNHFPICLSSSRSQSIKKVDQYLPDDRAFTTSFSEANLHFGIPNHTPESPHPLFINPSYHSPSNSPCVYDKFDSRKLDPVMFRKLQQVGYLPNLSSGISPAQRQHYLPHSQPLSHYQSPMTWRDIEEENFQRLKLQEEQYLSINPHFLHLQSMDTVPRQDHFDYRRAEQSNRNLFWNGEDGNESVRKMCYPEKILMRSQMDLNTAKVIKYGAGDESQNGRLWLQNQLNEDLTMSLNNLSLQPQKYNSIAEARGKIYYLAKDQHGCRFLQRIFSEKDGNDIEMIFNEIIDYISELMMDPFGNYLVQKLLEVCNEDQRMQIVHSITRKPGLLIKISCDMHGTRAVQKIVETAKREEEISIIISALKHGIVHLIKNVNGNHVVQRCLQYLLPYCGKFLFEAAITHCVELATDRHGCCVLQKCLGYSEGEQKQHLVSEIASNALLLSQDPFGNYVLQYVFELQLQWATFEILEQLEGNYTELSMQKCSSNVVEKCLKLADDKHRARIIRELINYGRLDQVMLDPYGNYVIQAALKQSKGNVHALLVDAIKLNISSLRTNPYGKKVLSALSSKK</sequence>